<dbReference type="EC" id="3.1.-.-" evidence="1"/>
<dbReference type="EMBL" id="AE014075">
    <property type="protein sequence ID" value="AAN81813.1"/>
    <property type="status" value="ALT_INIT"/>
    <property type="molecule type" value="Genomic_DNA"/>
</dbReference>
<dbReference type="RefSeq" id="WP_001296330.1">
    <property type="nucleotide sequence ID" value="NZ_CP051263.1"/>
</dbReference>
<dbReference type="SMR" id="Q8FEF2"/>
<dbReference type="STRING" id="199310.c3366"/>
<dbReference type="KEGG" id="ecc:c3366"/>
<dbReference type="eggNOG" id="COG0258">
    <property type="taxonomic scope" value="Bacteria"/>
</dbReference>
<dbReference type="HOGENOM" id="CLU_004675_1_2_6"/>
<dbReference type="Proteomes" id="UP000001410">
    <property type="component" value="Chromosome"/>
</dbReference>
<dbReference type="GO" id="GO:0008409">
    <property type="term" value="F:5'-3' exonuclease activity"/>
    <property type="evidence" value="ECO:0007669"/>
    <property type="project" value="InterPro"/>
</dbReference>
<dbReference type="GO" id="GO:0017108">
    <property type="term" value="F:5'-flap endonuclease activity"/>
    <property type="evidence" value="ECO:0007669"/>
    <property type="project" value="UniProtKB-UniRule"/>
</dbReference>
<dbReference type="GO" id="GO:0003677">
    <property type="term" value="F:DNA binding"/>
    <property type="evidence" value="ECO:0007669"/>
    <property type="project" value="UniProtKB-UniRule"/>
</dbReference>
<dbReference type="GO" id="GO:0000287">
    <property type="term" value="F:magnesium ion binding"/>
    <property type="evidence" value="ECO:0007669"/>
    <property type="project" value="UniProtKB-UniRule"/>
</dbReference>
<dbReference type="GO" id="GO:0030955">
    <property type="term" value="F:potassium ion binding"/>
    <property type="evidence" value="ECO:0007669"/>
    <property type="project" value="UniProtKB-UniRule"/>
</dbReference>
<dbReference type="GO" id="GO:0033567">
    <property type="term" value="P:DNA replication, Okazaki fragment processing"/>
    <property type="evidence" value="ECO:0007669"/>
    <property type="project" value="UniProtKB-UniRule"/>
</dbReference>
<dbReference type="CDD" id="cd09898">
    <property type="entry name" value="H3TH_53EXO"/>
    <property type="match status" value="1"/>
</dbReference>
<dbReference type="CDD" id="cd09859">
    <property type="entry name" value="PIN_53EXO"/>
    <property type="match status" value="1"/>
</dbReference>
<dbReference type="FunFam" id="1.10.150.20:FF:000003">
    <property type="entry name" value="DNA polymerase I"/>
    <property type="match status" value="1"/>
</dbReference>
<dbReference type="FunFam" id="3.40.50.1010:FF:000011">
    <property type="entry name" value="Flap endonuclease Xni"/>
    <property type="match status" value="1"/>
</dbReference>
<dbReference type="Gene3D" id="1.10.150.20">
    <property type="entry name" value="5' to 3' exonuclease, C-terminal subdomain"/>
    <property type="match status" value="1"/>
</dbReference>
<dbReference type="Gene3D" id="3.40.50.1010">
    <property type="entry name" value="5'-nuclease"/>
    <property type="match status" value="1"/>
</dbReference>
<dbReference type="HAMAP" id="MF_01192">
    <property type="entry name" value="Xni"/>
    <property type="match status" value="1"/>
</dbReference>
<dbReference type="InterPro" id="IPR020046">
    <property type="entry name" value="5-3_exonucl_a-hlix_arch_N"/>
</dbReference>
<dbReference type="InterPro" id="IPR002421">
    <property type="entry name" value="5-3_exonuclease"/>
</dbReference>
<dbReference type="InterPro" id="IPR036279">
    <property type="entry name" value="5-3_exonuclease_C_sf"/>
</dbReference>
<dbReference type="InterPro" id="IPR020045">
    <property type="entry name" value="DNA_polI_H3TH"/>
</dbReference>
<dbReference type="InterPro" id="IPR038969">
    <property type="entry name" value="FEN"/>
</dbReference>
<dbReference type="InterPro" id="IPR008918">
    <property type="entry name" value="HhH2"/>
</dbReference>
<dbReference type="InterPro" id="IPR029060">
    <property type="entry name" value="PIN-like_dom_sf"/>
</dbReference>
<dbReference type="InterPro" id="IPR022895">
    <property type="entry name" value="Xni"/>
</dbReference>
<dbReference type="NCBIfam" id="NF007017">
    <property type="entry name" value="PRK09482.1"/>
    <property type="match status" value="1"/>
</dbReference>
<dbReference type="PANTHER" id="PTHR42646:SF2">
    <property type="entry name" value="5'-3' EXONUCLEASE FAMILY PROTEIN"/>
    <property type="match status" value="1"/>
</dbReference>
<dbReference type="PANTHER" id="PTHR42646">
    <property type="entry name" value="FLAP ENDONUCLEASE XNI"/>
    <property type="match status" value="1"/>
</dbReference>
<dbReference type="Pfam" id="PF01367">
    <property type="entry name" value="5_3_exonuc"/>
    <property type="match status" value="1"/>
</dbReference>
<dbReference type="Pfam" id="PF02739">
    <property type="entry name" value="5_3_exonuc_N"/>
    <property type="match status" value="1"/>
</dbReference>
<dbReference type="SMART" id="SM00475">
    <property type="entry name" value="53EXOc"/>
    <property type="match status" value="1"/>
</dbReference>
<dbReference type="SMART" id="SM00279">
    <property type="entry name" value="HhH2"/>
    <property type="match status" value="1"/>
</dbReference>
<dbReference type="SUPFAM" id="SSF47807">
    <property type="entry name" value="5' to 3' exonuclease, C-terminal subdomain"/>
    <property type="match status" value="1"/>
</dbReference>
<dbReference type="SUPFAM" id="SSF88723">
    <property type="entry name" value="PIN domain-like"/>
    <property type="match status" value="1"/>
</dbReference>
<sequence>MAVHLLIVDALNLIRRIHAVQGSPCVETCQHALDQLIMHSQPTHAVAVFDDENRSSGWRHQRLPDYKAGRPPMPEELHNEMPALRAAFEQRGVPCWSASGNEADDLAATLAVKVTQAGHQATIVSTDKGYCQLLSPTLRIRDYFQKRWLDAPFIDKEFGVQPQQLPDYWGLAGISSSKVPGVAGIGPKSATQLLVEFQSLEGIYENLDAVAEKWRKKLETHKEMAFLCRDIARLQTDLHIDGNLQQLRLVR</sequence>
<reference key="1">
    <citation type="journal article" date="2002" name="Proc. Natl. Acad. Sci. U.S.A.">
        <title>Extensive mosaic structure revealed by the complete genome sequence of uropathogenic Escherichia coli.</title>
        <authorList>
            <person name="Welch R.A."/>
            <person name="Burland V."/>
            <person name="Plunkett G. III"/>
            <person name="Redford P."/>
            <person name="Roesch P."/>
            <person name="Rasko D."/>
            <person name="Buckles E.L."/>
            <person name="Liou S.-R."/>
            <person name="Boutin A."/>
            <person name="Hackett J."/>
            <person name="Stroud D."/>
            <person name="Mayhew G.F."/>
            <person name="Rose D.J."/>
            <person name="Zhou S."/>
            <person name="Schwartz D.C."/>
            <person name="Perna N.T."/>
            <person name="Mobley H.L.T."/>
            <person name="Donnenberg M.S."/>
            <person name="Blattner F.R."/>
        </authorList>
    </citation>
    <scope>NUCLEOTIDE SEQUENCE [LARGE SCALE GENOMIC DNA]</scope>
    <source>
        <strain>CFT073 / ATCC 700928 / UPEC</strain>
    </source>
</reference>
<organism>
    <name type="scientific">Escherichia coli O6:H1 (strain CFT073 / ATCC 700928 / UPEC)</name>
    <dbReference type="NCBI Taxonomy" id="199310"/>
    <lineage>
        <taxon>Bacteria</taxon>
        <taxon>Pseudomonadati</taxon>
        <taxon>Pseudomonadota</taxon>
        <taxon>Gammaproteobacteria</taxon>
        <taxon>Enterobacterales</taxon>
        <taxon>Enterobacteriaceae</taxon>
        <taxon>Escherichia</taxon>
    </lineage>
</organism>
<proteinExistence type="inferred from homology"/>
<protein>
    <recommendedName>
        <fullName evidence="1">Flap endonuclease Xni</fullName>
        <shortName evidence="1">FEN</shortName>
        <ecNumber evidence="1">3.1.-.-</ecNumber>
    </recommendedName>
</protein>
<comment type="function">
    <text evidence="1">Has flap endonuclease activity. During DNA replication, flap endonucleases cleave the 5'-overhanging flap structure that is generated by displacement synthesis when DNA polymerase encounters the 5'-end of a downstream Okazaki fragment.</text>
</comment>
<comment type="cofactor">
    <cofactor evidence="1">
        <name>Mg(2+)</name>
        <dbReference type="ChEBI" id="CHEBI:18420"/>
    </cofactor>
    <text evidence="1">Binds 2 Mg(2+) per subunit. Only one magnesium ion has a direct interaction with the protein, the other interactions are indirect.</text>
</comment>
<comment type="cofactor">
    <cofactor evidence="1">
        <name>K(+)</name>
        <dbReference type="ChEBI" id="CHEBI:29103"/>
    </cofactor>
    <text evidence="1">Binds 1 K(+) per subunit. The potassium ion strongly increases the affinity for DNA.</text>
</comment>
<comment type="similarity">
    <text evidence="1">Belongs to the Xni family.</text>
</comment>
<comment type="sequence caution" evidence="2">
    <conflict type="erroneous initiation">
        <sequence resource="EMBL-CDS" id="AAN81813"/>
    </conflict>
    <text>Extended N-terminus.</text>
</comment>
<accession>Q8FEF2</accession>
<keyword id="KW-0238">DNA-binding</keyword>
<keyword id="KW-0255">Endonuclease</keyword>
<keyword id="KW-0378">Hydrolase</keyword>
<keyword id="KW-0460">Magnesium</keyword>
<keyword id="KW-0479">Metal-binding</keyword>
<keyword id="KW-0540">Nuclease</keyword>
<keyword id="KW-0630">Potassium</keyword>
<keyword id="KW-1185">Reference proteome</keyword>
<name>XNI_ECOL6</name>
<feature type="chain" id="PRO_0000297863" description="Flap endonuclease Xni">
    <location>
        <begin position="1"/>
        <end position="251"/>
    </location>
</feature>
<feature type="domain" description="5'-3' exonuclease" evidence="1">
    <location>
        <begin position="160"/>
        <end position="249"/>
    </location>
</feature>
<feature type="region of interest" description="Interaction with DNA" evidence="1">
    <location>
        <begin position="184"/>
        <end position="189"/>
    </location>
</feature>
<feature type="binding site" evidence="1">
    <location>
        <position position="104"/>
    </location>
    <ligand>
        <name>Mg(2+)</name>
        <dbReference type="ChEBI" id="CHEBI:18420"/>
    </ligand>
</feature>
<feature type="binding site" evidence="1">
    <location>
        <position position="171"/>
    </location>
    <ligand>
        <name>K(+)</name>
        <dbReference type="ChEBI" id="CHEBI:29103"/>
    </ligand>
</feature>
<feature type="binding site" evidence="1">
    <location>
        <position position="172"/>
    </location>
    <ligand>
        <name>K(+)</name>
        <dbReference type="ChEBI" id="CHEBI:29103"/>
    </ligand>
</feature>
<feature type="binding site" evidence="1">
    <location>
        <position position="180"/>
    </location>
    <ligand>
        <name>K(+)</name>
        <dbReference type="ChEBI" id="CHEBI:29103"/>
    </ligand>
</feature>
<feature type="binding site" evidence="1">
    <location>
        <position position="182"/>
    </location>
    <ligand>
        <name>K(+)</name>
        <dbReference type="ChEBI" id="CHEBI:29103"/>
    </ligand>
</feature>
<feature type="binding site" evidence="1">
    <location>
        <position position="185"/>
    </location>
    <ligand>
        <name>K(+)</name>
        <dbReference type="ChEBI" id="CHEBI:29103"/>
    </ligand>
</feature>
<gene>
    <name evidence="1" type="primary">xni</name>
    <name evidence="1" type="synonym">ygdG</name>
    <name type="ordered locus">c3366</name>
</gene>
<evidence type="ECO:0000255" key="1">
    <source>
        <dbReference type="HAMAP-Rule" id="MF_01192"/>
    </source>
</evidence>
<evidence type="ECO:0000305" key="2"/>